<accession>O75629</accession>
<accession>B2RDD4</accession>
<accession>Q8N9A3</accession>
<dbReference type="EMBL" id="AF084523">
    <property type="protein sequence ID" value="AAC34861.1"/>
    <property type="molecule type" value="mRNA"/>
</dbReference>
<dbReference type="EMBL" id="AY359071">
    <property type="protein sequence ID" value="AAQ89430.1"/>
    <property type="molecule type" value="mRNA"/>
</dbReference>
<dbReference type="EMBL" id="AK095456">
    <property type="protein sequence ID" value="BAC04550.1"/>
    <property type="molecule type" value="mRNA"/>
</dbReference>
<dbReference type="EMBL" id="AK315497">
    <property type="protein sequence ID" value="BAG37881.1"/>
    <property type="molecule type" value="mRNA"/>
</dbReference>
<dbReference type="EMBL" id="AL031733">
    <property type="status" value="NOT_ANNOTATED_CDS"/>
    <property type="molecule type" value="Genomic_DNA"/>
</dbReference>
<dbReference type="EMBL" id="CH471067">
    <property type="protein sequence ID" value="EAW90795.1"/>
    <property type="molecule type" value="Genomic_DNA"/>
</dbReference>
<dbReference type="EMBL" id="BC006786">
    <property type="protein sequence ID" value="AAH06786.1"/>
    <property type="molecule type" value="mRNA"/>
</dbReference>
<dbReference type="EMBL" id="BC008628">
    <property type="protein sequence ID" value="AAH08628.1"/>
    <property type="molecule type" value="mRNA"/>
</dbReference>
<dbReference type="CCDS" id="CCDS1262.1"/>
<dbReference type="RefSeq" id="NP_003842.1">
    <property type="nucleotide sequence ID" value="NM_003851.3"/>
</dbReference>
<dbReference type="PDB" id="1XHN">
    <property type="method" value="X-ray"/>
    <property type="resolution" value="1.95 A"/>
    <property type="chains" value="A/B/C/D=49-220"/>
</dbReference>
<dbReference type="PDBsum" id="1XHN"/>
<dbReference type="SMR" id="O75629"/>
<dbReference type="BioGRID" id="114332">
    <property type="interactions" value="38"/>
</dbReference>
<dbReference type="FunCoup" id="O75629">
    <property type="interactions" value="210"/>
</dbReference>
<dbReference type="IntAct" id="O75629">
    <property type="interactions" value="18"/>
</dbReference>
<dbReference type="MINT" id="O75629"/>
<dbReference type="STRING" id="9606.ENSP00000359540"/>
<dbReference type="GlyConnect" id="1653">
    <property type="glycosylation" value="13 N-Linked glycans (3 sites)"/>
</dbReference>
<dbReference type="GlyCosmos" id="O75629">
    <property type="glycosylation" value="4 sites, 13 glycans"/>
</dbReference>
<dbReference type="GlyGen" id="O75629">
    <property type="glycosylation" value="5 sites, 53 N-linked glycans (3 sites), 1 O-linked glycan (1 site)"/>
</dbReference>
<dbReference type="iPTMnet" id="O75629"/>
<dbReference type="PhosphoSitePlus" id="O75629"/>
<dbReference type="BioMuta" id="CREG1"/>
<dbReference type="CPTAC" id="CPTAC-1487"/>
<dbReference type="jPOST" id="O75629"/>
<dbReference type="MassIVE" id="O75629"/>
<dbReference type="PaxDb" id="9606-ENSP00000359540"/>
<dbReference type="PeptideAtlas" id="O75629"/>
<dbReference type="ProteomicsDB" id="50128"/>
<dbReference type="Pumba" id="O75629"/>
<dbReference type="Antibodypedia" id="20531">
    <property type="antibodies" value="328 antibodies from 34 providers"/>
</dbReference>
<dbReference type="DNASU" id="8804"/>
<dbReference type="Ensembl" id="ENST00000370509.5">
    <property type="protein sequence ID" value="ENSP00000359540.4"/>
    <property type="gene ID" value="ENSG00000143162.9"/>
</dbReference>
<dbReference type="GeneID" id="8804"/>
<dbReference type="KEGG" id="hsa:8804"/>
<dbReference type="MANE-Select" id="ENST00000370509.5">
    <property type="protein sequence ID" value="ENSP00000359540.4"/>
    <property type="RefSeq nucleotide sequence ID" value="NM_003851.3"/>
    <property type="RefSeq protein sequence ID" value="NP_003842.1"/>
</dbReference>
<dbReference type="UCSC" id="uc001gel.4">
    <property type="organism name" value="human"/>
</dbReference>
<dbReference type="AGR" id="HGNC:2351"/>
<dbReference type="CTD" id="8804"/>
<dbReference type="DisGeNET" id="8804"/>
<dbReference type="GeneCards" id="CREG1"/>
<dbReference type="HGNC" id="HGNC:2351">
    <property type="gene designation" value="CREG1"/>
</dbReference>
<dbReference type="HPA" id="ENSG00000143162">
    <property type="expression patterns" value="Low tissue specificity"/>
</dbReference>
<dbReference type="MIM" id="618055">
    <property type="type" value="gene"/>
</dbReference>
<dbReference type="neXtProt" id="NX_O75629"/>
<dbReference type="OpenTargets" id="ENSG00000143162"/>
<dbReference type="PharmGKB" id="PA26869"/>
<dbReference type="VEuPathDB" id="HostDB:ENSG00000143162"/>
<dbReference type="eggNOG" id="KOG3374">
    <property type="taxonomic scope" value="Eukaryota"/>
</dbReference>
<dbReference type="GeneTree" id="ENSGT00390000005914"/>
<dbReference type="HOGENOM" id="CLU_083635_3_1_1"/>
<dbReference type="InParanoid" id="O75629"/>
<dbReference type="OMA" id="AQTPYCR"/>
<dbReference type="OrthoDB" id="46836at2759"/>
<dbReference type="PAN-GO" id="O75629">
    <property type="GO annotations" value="1 GO annotation based on evolutionary models"/>
</dbReference>
<dbReference type="PhylomeDB" id="O75629"/>
<dbReference type="TreeFam" id="TF324680"/>
<dbReference type="PathwayCommons" id="O75629"/>
<dbReference type="Reactome" id="R-HSA-6798695">
    <property type="pathway name" value="Neutrophil degranulation"/>
</dbReference>
<dbReference type="SignaLink" id="O75629"/>
<dbReference type="BioGRID-ORCS" id="8804">
    <property type="hits" value="12 hits in 1168 CRISPR screens"/>
</dbReference>
<dbReference type="ChiTaRS" id="CREG1">
    <property type="organism name" value="human"/>
</dbReference>
<dbReference type="EvolutionaryTrace" id="O75629"/>
<dbReference type="GeneWiki" id="CREG1"/>
<dbReference type="GenomeRNAi" id="8804"/>
<dbReference type="Pharos" id="O75629">
    <property type="development level" value="Tbio"/>
</dbReference>
<dbReference type="PRO" id="PR:O75629"/>
<dbReference type="Proteomes" id="UP000005640">
    <property type="component" value="Chromosome 1"/>
</dbReference>
<dbReference type="RNAct" id="O75629">
    <property type="molecule type" value="protein"/>
</dbReference>
<dbReference type="Bgee" id="ENSG00000143162">
    <property type="expression patterns" value="Expressed in upper leg skin and 210 other cell types or tissues"/>
</dbReference>
<dbReference type="ExpressionAtlas" id="O75629">
    <property type="expression patterns" value="baseline and differential"/>
</dbReference>
<dbReference type="GO" id="GO:0035578">
    <property type="term" value="C:azurophil granule lumen"/>
    <property type="evidence" value="ECO:0000304"/>
    <property type="project" value="Reactome"/>
</dbReference>
<dbReference type="GO" id="GO:0005768">
    <property type="term" value="C:endosome"/>
    <property type="evidence" value="ECO:0007669"/>
    <property type="project" value="Ensembl"/>
</dbReference>
<dbReference type="GO" id="GO:0070062">
    <property type="term" value="C:extracellular exosome"/>
    <property type="evidence" value="ECO:0007005"/>
    <property type="project" value="UniProtKB"/>
</dbReference>
<dbReference type="GO" id="GO:0005576">
    <property type="term" value="C:extracellular region"/>
    <property type="evidence" value="ECO:0000304"/>
    <property type="project" value="Reactome"/>
</dbReference>
<dbReference type="GO" id="GO:0005615">
    <property type="term" value="C:extracellular space"/>
    <property type="evidence" value="ECO:0000314"/>
    <property type="project" value="UniProtKB"/>
</dbReference>
<dbReference type="GO" id="GO:0005667">
    <property type="term" value="C:transcription regulator complex"/>
    <property type="evidence" value="ECO:0007669"/>
    <property type="project" value="Ensembl"/>
</dbReference>
<dbReference type="GO" id="GO:0003714">
    <property type="term" value="F:transcription corepressor activity"/>
    <property type="evidence" value="ECO:0000304"/>
    <property type="project" value="ProtInc"/>
</dbReference>
<dbReference type="GO" id="GO:0006914">
    <property type="term" value="P:autophagy"/>
    <property type="evidence" value="ECO:0007669"/>
    <property type="project" value="Ensembl"/>
</dbReference>
<dbReference type="GO" id="GO:0006897">
    <property type="term" value="P:endocytosis"/>
    <property type="evidence" value="ECO:0007669"/>
    <property type="project" value="Ensembl"/>
</dbReference>
<dbReference type="GO" id="GO:0007042">
    <property type="term" value="P:lysosomal lumen acidification"/>
    <property type="evidence" value="ECO:0007669"/>
    <property type="project" value="Ensembl"/>
</dbReference>
<dbReference type="GO" id="GO:0006357">
    <property type="term" value="P:regulation of transcription by RNA polymerase II"/>
    <property type="evidence" value="ECO:0000304"/>
    <property type="project" value="ProtInc"/>
</dbReference>
<dbReference type="FunFam" id="2.30.110.10:FF:000004">
    <property type="entry name" value="Cellular repressor of E1A-stimulated genes 1"/>
    <property type="match status" value="1"/>
</dbReference>
<dbReference type="Gene3D" id="2.30.110.10">
    <property type="entry name" value="Electron Transport, Fmn-binding Protein, Chain A"/>
    <property type="match status" value="1"/>
</dbReference>
<dbReference type="InterPro" id="IPR014631">
    <property type="entry name" value="CREG"/>
</dbReference>
<dbReference type="InterPro" id="IPR055343">
    <property type="entry name" value="CREG_beta-barrel"/>
</dbReference>
<dbReference type="InterPro" id="IPR012349">
    <property type="entry name" value="Split_barrel_FMN-bd"/>
</dbReference>
<dbReference type="PANTHER" id="PTHR13343">
    <property type="entry name" value="CREG1 PROTEIN"/>
    <property type="match status" value="1"/>
</dbReference>
<dbReference type="PANTHER" id="PTHR13343:SF21">
    <property type="entry name" value="PROTEIN CREG1"/>
    <property type="match status" value="1"/>
</dbReference>
<dbReference type="Pfam" id="PF13883">
    <property type="entry name" value="CREG_beta-barrel"/>
    <property type="match status" value="1"/>
</dbReference>
<dbReference type="PIRSF" id="PIRSF036911">
    <property type="entry name" value="CREG"/>
    <property type="match status" value="1"/>
</dbReference>
<dbReference type="SUPFAM" id="SSF50475">
    <property type="entry name" value="FMN-binding split barrel"/>
    <property type="match status" value="1"/>
</dbReference>
<keyword id="KW-0002">3D-structure</keyword>
<keyword id="KW-0903">Direct protein sequencing</keyword>
<keyword id="KW-0325">Glycoprotein</keyword>
<keyword id="KW-0341">Growth regulation</keyword>
<keyword id="KW-1267">Proteomics identification</keyword>
<keyword id="KW-1185">Reference proteome</keyword>
<keyword id="KW-0964">Secreted</keyword>
<keyword id="KW-0732">Signal</keyword>
<sequence length="220" mass="24075">MAGLSRGSARALLAALLASTLLALLVSPARGRGGRDHGDWDEASRLPPLPPREDAARVARFVTHVSDWGALATISTLEAVRGRPFADVLSLSDGPPGAGSGVPYFYLSPLQLSVSNLQENPYATLTMTLAQTNFCKKHGFDPQSPLCVHIMLSGTVTKVNETEMDIAKHSLFIRHPEMKTWPSSHNWFFAKLNITNIWVLDYFGGPKIVTPEEYYNVTVQ</sequence>
<proteinExistence type="evidence at protein level"/>
<comment type="function">
    <text evidence="2 6">May contribute to the transcriptional control of cell growth and differentiation. Antagonizes transcriptional activation and cellular transformation by the adenovirus E1A protein. The transcriptional control activity of cell growth requires interaction with IGF2R.</text>
</comment>
<comment type="subunit">
    <text evidence="2 4">Homodimer. Interacts with IGF2R; the interaction is dependent on glycosylation.</text>
</comment>
<comment type="subcellular location">
    <subcellularLocation>
        <location evidence="1">Secreted</location>
    </subcellularLocation>
</comment>
<comment type="PTM">
    <text evidence="1 5">N-glycosylated.</text>
</comment>
<comment type="similarity">
    <text evidence="7">Belongs to the CREG family.</text>
</comment>
<gene>
    <name type="primary">CREG1</name>
    <name type="synonym">CREG</name>
    <name type="ORF">UNQ727/PRO1409</name>
</gene>
<reference key="1">
    <citation type="journal article" date="1998" name="Mol. Cell. Biol.">
        <title>A cellular repressor of E1A-stimulated genes that inhibits activation by E2F.</title>
        <authorList>
            <person name="Veal E."/>
            <person name="Eisenstein M."/>
            <person name="Tseng Z.H."/>
            <person name="Gill G."/>
        </authorList>
    </citation>
    <scope>NUCLEOTIDE SEQUENCE [MRNA]</scope>
    <scope>FUNCTION</scope>
</reference>
<reference key="2">
    <citation type="journal article" date="2003" name="Genome Res.">
        <title>The secreted protein discovery initiative (SPDI), a large-scale effort to identify novel human secreted and transmembrane proteins: a bioinformatics assessment.</title>
        <authorList>
            <person name="Clark H.F."/>
            <person name="Gurney A.L."/>
            <person name="Abaya E."/>
            <person name="Baker K."/>
            <person name="Baldwin D.T."/>
            <person name="Brush J."/>
            <person name="Chen J."/>
            <person name="Chow B."/>
            <person name="Chui C."/>
            <person name="Crowley C."/>
            <person name="Currell B."/>
            <person name="Deuel B."/>
            <person name="Dowd P."/>
            <person name="Eaton D."/>
            <person name="Foster J.S."/>
            <person name="Grimaldi C."/>
            <person name="Gu Q."/>
            <person name="Hass P.E."/>
            <person name="Heldens S."/>
            <person name="Huang A."/>
            <person name="Kim H.S."/>
            <person name="Klimowski L."/>
            <person name="Jin Y."/>
            <person name="Johnson S."/>
            <person name="Lee J."/>
            <person name="Lewis L."/>
            <person name="Liao D."/>
            <person name="Mark M.R."/>
            <person name="Robbie E."/>
            <person name="Sanchez C."/>
            <person name="Schoenfeld J."/>
            <person name="Seshagiri S."/>
            <person name="Simmons L."/>
            <person name="Singh J."/>
            <person name="Smith V."/>
            <person name="Stinson J."/>
            <person name="Vagts A."/>
            <person name="Vandlen R.L."/>
            <person name="Watanabe C."/>
            <person name="Wieand D."/>
            <person name="Woods K."/>
            <person name="Xie M.-H."/>
            <person name="Yansura D.G."/>
            <person name="Yi S."/>
            <person name="Yu G."/>
            <person name="Yuan J."/>
            <person name="Zhang M."/>
            <person name="Zhang Z."/>
            <person name="Goddard A.D."/>
            <person name="Wood W.I."/>
            <person name="Godowski P.J."/>
            <person name="Gray A.M."/>
        </authorList>
    </citation>
    <scope>NUCLEOTIDE SEQUENCE [LARGE SCALE MRNA]</scope>
</reference>
<reference key="3">
    <citation type="journal article" date="2004" name="Nat. Genet.">
        <title>Complete sequencing and characterization of 21,243 full-length human cDNAs.</title>
        <authorList>
            <person name="Ota T."/>
            <person name="Suzuki Y."/>
            <person name="Nishikawa T."/>
            <person name="Otsuki T."/>
            <person name="Sugiyama T."/>
            <person name="Irie R."/>
            <person name="Wakamatsu A."/>
            <person name="Hayashi K."/>
            <person name="Sato H."/>
            <person name="Nagai K."/>
            <person name="Kimura K."/>
            <person name="Makita H."/>
            <person name="Sekine M."/>
            <person name="Obayashi M."/>
            <person name="Nishi T."/>
            <person name="Shibahara T."/>
            <person name="Tanaka T."/>
            <person name="Ishii S."/>
            <person name="Yamamoto J."/>
            <person name="Saito K."/>
            <person name="Kawai Y."/>
            <person name="Isono Y."/>
            <person name="Nakamura Y."/>
            <person name="Nagahari K."/>
            <person name="Murakami K."/>
            <person name="Yasuda T."/>
            <person name="Iwayanagi T."/>
            <person name="Wagatsuma M."/>
            <person name="Shiratori A."/>
            <person name="Sudo H."/>
            <person name="Hosoiri T."/>
            <person name="Kaku Y."/>
            <person name="Kodaira H."/>
            <person name="Kondo H."/>
            <person name="Sugawara M."/>
            <person name="Takahashi M."/>
            <person name="Kanda K."/>
            <person name="Yokoi T."/>
            <person name="Furuya T."/>
            <person name="Kikkawa E."/>
            <person name="Omura Y."/>
            <person name="Abe K."/>
            <person name="Kamihara K."/>
            <person name="Katsuta N."/>
            <person name="Sato K."/>
            <person name="Tanikawa M."/>
            <person name="Yamazaki M."/>
            <person name="Ninomiya K."/>
            <person name="Ishibashi T."/>
            <person name="Yamashita H."/>
            <person name="Murakawa K."/>
            <person name="Fujimori K."/>
            <person name="Tanai H."/>
            <person name="Kimata M."/>
            <person name="Watanabe M."/>
            <person name="Hiraoka S."/>
            <person name="Chiba Y."/>
            <person name="Ishida S."/>
            <person name="Ono Y."/>
            <person name="Takiguchi S."/>
            <person name="Watanabe S."/>
            <person name="Yosida M."/>
            <person name="Hotuta T."/>
            <person name="Kusano J."/>
            <person name="Kanehori K."/>
            <person name="Takahashi-Fujii A."/>
            <person name="Hara H."/>
            <person name="Tanase T.-O."/>
            <person name="Nomura Y."/>
            <person name="Togiya S."/>
            <person name="Komai F."/>
            <person name="Hara R."/>
            <person name="Takeuchi K."/>
            <person name="Arita M."/>
            <person name="Imose N."/>
            <person name="Musashino K."/>
            <person name="Yuuki H."/>
            <person name="Oshima A."/>
            <person name="Sasaki N."/>
            <person name="Aotsuka S."/>
            <person name="Yoshikawa Y."/>
            <person name="Matsunawa H."/>
            <person name="Ichihara T."/>
            <person name="Shiohata N."/>
            <person name="Sano S."/>
            <person name="Moriya S."/>
            <person name="Momiyama H."/>
            <person name="Satoh N."/>
            <person name="Takami S."/>
            <person name="Terashima Y."/>
            <person name="Suzuki O."/>
            <person name="Nakagawa S."/>
            <person name="Senoh A."/>
            <person name="Mizoguchi H."/>
            <person name="Goto Y."/>
            <person name="Shimizu F."/>
            <person name="Wakebe H."/>
            <person name="Hishigaki H."/>
            <person name="Watanabe T."/>
            <person name="Sugiyama A."/>
            <person name="Takemoto M."/>
            <person name="Kawakami B."/>
            <person name="Yamazaki M."/>
            <person name="Watanabe K."/>
            <person name="Kumagai A."/>
            <person name="Itakura S."/>
            <person name="Fukuzumi Y."/>
            <person name="Fujimori Y."/>
            <person name="Komiyama M."/>
            <person name="Tashiro H."/>
            <person name="Tanigami A."/>
            <person name="Fujiwara T."/>
            <person name="Ono T."/>
            <person name="Yamada K."/>
            <person name="Fujii Y."/>
            <person name="Ozaki K."/>
            <person name="Hirao M."/>
            <person name="Ohmori Y."/>
            <person name="Kawabata A."/>
            <person name="Hikiji T."/>
            <person name="Kobatake N."/>
            <person name="Inagaki H."/>
            <person name="Ikema Y."/>
            <person name="Okamoto S."/>
            <person name="Okitani R."/>
            <person name="Kawakami T."/>
            <person name="Noguchi S."/>
            <person name="Itoh T."/>
            <person name="Shigeta K."/>
            <person name="Senba T."/>
            <person name="Matsumura K."/>
            <person name="Nakajima Y."/>
            <person name="Mizuno T."/>
            <person name="Morinaga M."/>
            <person name="Sasaki M."/>
            <person name="Togashi T."/>
            <person name="Oyama M."/>
            <person name="Hata H."/>
            <person name="Watanabe M."/>
            <person name="Komatsu T."/>
            <person name="Mizushima-Sugano J."/>
            <person name="Satoh T."/>
            <person name="Shirai Y."/>
            <person name="Takahashi Y."/>
            <person name="Nakagawa K."/>
            <person name="Okumura K."/>
            <person name="Nagase T."/>
            <person name="Nomura N."/>
            <person name="Kikuchi H."/>
            <person name="Masuho Y."/>
            <person name="Yamashita R."/>
            <person name="Nakai K."/>
            <person name="Yada T."/>
            <person name="Nakamura Y."/>
            <person name="Ohara O."/>
            <person name="Isogai T."/>
            <person name="Sugano S."/>
        </authorList>
    </citation>
    <scope>NUCLEOTIDE SEQUENCE [LARGE SCALE MRNA]</scope>
    <source>
        <tissue>Tongue</tissue>
    </source>
</reference>
<reference key="4">
    <citation type="journal article" date="2006" name="Nature">
        <title>The DNA sequence and biological annotation of human chromosome 1.</title>
        <authorList>
            <person name="Gregory S.G."/>
            <person name="Barlow K.F."/>
            <person name="McLay K.E."/>
            <person name="Kaul R."/>
            <person name="Swarbreck D."/>
            <person name="Dunham A."/>
            <person name="Scott C.E."/>
            <person name="Howe K.L."/>
            <person name="Woodfine K."/>
            <person name="Spencer C.C.A."/>
            <person name="Jones M.C."/>
            <person name="Gillson C."/>
            <person name="Searle S."/>
            <person name="Zhou Y."/>
            <person name="Kokocinski F."/>
            <person name="McDonald L."/>
            <person name="Evans R."/>
            <person name="Phillips K."/>
            <person name="Atkinson A."/>
            <person name="Cooper R."/>
            <person name="Jones C."/>
            <person name="Hall R.E."/>
            <person name="Andrews T.D."/>
            <person name="Lloyd C."/>
            <person name="Ainscough R."/>
            <person name="Almeida J.P."/>
            <person name="Ambrose K.D."/>
            <person name="Anderson F."/>
            <person name="Andrew R.W."/>
            <person name="Ashwell R.I.S."/>
            <person name="Aubin K."/>
            <person name="Babbage A.K."/>
            <person name="Bagguley C.L."/>
            <person name="Bailey J."/>
            <person name="Beasley H."/>
            <person name="Bethel G."/>
            <person name="Bird C.P."/>
            <person name="Bray-Allen S."/>
            <person name="Brown J.Y."/>
            <person name="Brown A.J."/>
            <person name="Buckley D."/>
            <person name="Burton J."/>
            <person name="Bye J."/>
            <person name="Carder C."/>
            <person name="Chapman J.C."/>
            <person name="Clark S.Y."/>
            <person name="Clarke G."/>
            <person name="Clee C."/>
            <person name="Cobley V."/>
            <person name="Collier R.E."/>
            <person name="Corby N."/>
            <person name="Coville G.J."/>
            <person name="Davies J."/>
            <person name="Deadman R."/>
            <person name="Dunn M."/>
            <person name="Earthrowl M."/>
            <person name="Ellington A.G."/>
            <person name="Errington H."/>
            <person name="Frankish A."/>
            <person name="Frankland J."/>
            <person name="French L."/>
            <person name="Garner P."/>
            <person name="Garnett J."/>
            <person name="Gay L."/>
            <person name="Ghori M.R.J."/>
            <person name="Gibson R."/>
            <person name="Gilby L.M."/>
            <person name="Gillett W."/>
            <person name="Glithero R.J."/>
            <person name="Grafham D.V."/>
            <person name="Griffiths C."/>
            <person name="Griffiths-Jones S."/>
            <person name="Grocock R."/>
            <person name="Hammond S."/>
            <person name="Harrison E.S.I."/>
            <person name="Hart E."/>
            <person name="Haugen E."/>
            <person name="Heath P.D."/>
            <person name="Holmes S."/>
            <person name="Holt K."/>
            <person name="Howden P.J."/>
            <person name="Hunt A.R."/>
            <person name="Hunt S.E."/>
            <person name="Hunter G."/>
            <person name="Isherwood J."/>
            <person name="James R."/>
            <person name="Johnson C."/>
            <person name="Johnson D."/>
            <person name="Joy A."/>
            <person name="Kay M."/>
            <person name="Kershaw J.K."/>
            <person name="Kibukawa M."/>
            <person name="Kimberley A.M."/>
            <person name="King A."/>
            <person name="Knights A.J."/>
            <person name="Lad H."/>
            <person name="Laird G."/>
            <person name="Lawlor S."/>
            <person name="Leongamornlert D.A."/>
            <person name="Lloyd D.M."/>
            <person name="Loveland J."/>
            <person name="Lovell J."/>
            <person name="Lush M.J."/>
            <person name="Lyne R."/>
            <person name="Martin S."/>
            <person name="Mashreghi-Mohammadi M."/>
            <person name="Matthews L."/>
            <person name="Matthews N.S.W."/>
            <person name="McLaren S."/>
            <person name="Milne S."/>
            <person name="Mistry S."/>
            <person name="Moore M.J.F."/>
            <person name="Nickerson T."/>
            <person name="O'Dell C.N."/>
            <person name="Oliver K."/>
            <person name="Palmeiri A."/>
            <person name="Palmer S.A."/>
            <person name="Parker A."/>
            <person name="Patel D."/>
            <person name="Pearce A.V."/>
            <person name="Peck A.I."/>
            <person name="Pelan S."/>
            <person name="Phelps K."/>
            <person name="Phillimore B.J."/>
            <person name="Plumb R."/>
            <person name="Rajan J."/>
            <person name="Raymond C."/>
            <person name="Rouse G."/>
            <person name="Saenphimmachak C."/>
            <person name="Sehra H.K."/>
            <person name="Sheridan E."/>
            <person name="Shownkeen R."/>
            <person name="Sims S."/>
            <person name="Skuce C.D."/>
            <person name="Smith M."/>
            <person name="Steward C."/>
            <person name="Subramanian S."/>
            <person name="Sycamore N."/>
            <person name="Tracey A."/>
            <person name="Tromans A."/>
            <person name="Van Helmond Z."/>
            <person name="Wall M."/>
            <person name="Wallis J.M."/>
            <person name="White S."/>
            <person name="Whitehead S.L."/>
            <person name="Wilkinson J.E."/>
            <person name="Willey D.L."/>
            <person name="Williams H."/>
            <person name="Wilming L."/>
            <person name="Wray P.W."/>
            <person name="Wu Z."/>
            <person name="Coulson A."/>
            <person name="Vaudin M."/>
            <person name="Sulston J.E."/>
            <person name="Durbin R.M."/>
            <person name="Hubbard T."/>
            <person name="Wooster R."/>
            <person name="Dunham I."/>
            <person name="Carter N.P."/>
            <person name="McVean G."/>
            <person name="Ross M.T."/>
            <person name="Harrow J."/>
            <person name="Olson M.V."/>
            <person name="Beck S."/>
            <person name="Rogers J."/>
            <person name="Bentley D.R."/>
        </authorList>
    </citation>
    <scope>NUCLEOTIDE SEQUENCE [LARGE SCALE GENOMIC DNA]</scope>
</reference>
<reference key="5">
    <citation type="submission" date="2005-07" db="EMBL/GenBank/DDBJ databases">
        <authorList>
            <person name="Mural R.J."/>
            <person name="Istrail S."/>
            <person name="Sutton G.G."/>
            <person name="Florea L."/>
            <person name="Halpern A.L."/>
            <person name="Mobarry C.M."/>
            <person name="Lippert R."/>
            <person name="Walenz B."/>
            <person name="Shatkay H."/>
            <person name="Dew I."/>
            <person name="Miller J.R."/>
            <person name="Flanigan M.J."/>
            <person name="Edwards N.J."/>
            <person name="Bolanos R."/>
            <person name="Fasulo D."/>
            <person name="Halldorsson B.V."/>
            <person name="Hannenhalli S."/>
            <person name="Turner R."/>
            <person name="Yooseph S."/>
            <person name="Lu F."/>
            <person name="Nusskern D.R."/>
            <person name="Shue B.C."/>
            <person name="Zheng X.H."/>
            <person name="Zhong F."/>
            <person name="Delcher A.L."/>
            <person name="Huson D.H."/>
            <person name="Kravitz S.A."/>
            <person name="Mouchard L."/>
            <person name="Reinert K."/>
            <person name="Remington K.A."/>
            <person name="Clark A.G."/>
            <person name="Waterman M.S."/>
            <person name="Eichler E.E."/>
            <person name="Adams M.D."/>
            <person name="Hunkapiller M.W."/>
            <person name="Myers E.W."/>
            <person name="Venter J.C."/>
        </authorList>
    </citation>
    <scope>NUCLEOTIDE SEQUENCE [LARGE SCALE GENOMIC DNA]</scope>
</reference>
<reference key="6">
    <citation type="journal article" date="2004" name="Genome Res.">
        <title>The status, quality, and expansion of the NIH full-length cDNA project: the Mammalian Gene Collection (MGC).</title>
        <authorList>
            <consortium name="The MGC Project Team"/>
        </authorList>
    </citation>
    <scope>NUCLEOTIDE SEQUENCE [LARGE SCALE MRNA]</scope>
    <source>
        <tissue>Lymph</tissue>
        <tissue>Placenta</tissue>
    </source>
</reference>
<reference key="7">
    <citation type="journal article" date="2004" name="Protein Sci.">
        <title>Signal peptide prediction based on analysis of experimentally verified cleavage sites.</title>
        <authorList>
            <person name="Zhang Z."/>
            <person name="Henzel W.J."/>
        </authorList>
    </citation>
    <scope>PROTEIN SEQUENCE OF 32-46</scope>
</reference>
<reference key="8">
    <citation type="journal article" date="2000" name="Oncogene">
        <title>The secreted glycoprotein CREG enhances differentiation of NTERA-2 human embryonal carcinoma cells.</title>
        <authorList>
            <person name="Veal E."/>
            <person name="Groisman R."/>
            <person name="Eisenstein M."/>
            <person name="Gill G."/>
        </authorList>
    </citation>
    <scope>SUBCELLULAR LOCATION</scope>
    <scope>GLYCOSYLATION</scope>
</reference>
<reference key="9">
    <citation type="journal article" date="2003" name="Oncogene">
        <title>The secreted glycoprotein CREG inhibits cell growth dependent on the mannose-6-phosphate/insulin-like growth factor II receptor.</title>
        <authorList>
            <person name="Di Bacco A."/>
            <person name="Gill G."/>
        </authorList>
    </citation>
    <scope>INTERACTION WITH IGF2R</scope>
    <scope>FUNCTION</scope>
</reference>
<reference key="10">
    <citation type="journal article" date="2009" name="J. Proteome Res.">
        <title>Glycoproteomics analysis of human liver tissue by combination of multiple enzyme digestion and hydrazide chemistry.</title>
        <authorList>
            <person name="Chen R."/>
            <person name="Jiang X."/>
            <person name="Sun D."/>
            <person name="Han G."/>
            <person name="Wang F."/>
            <person name="Ye M."/>
            <person name="Wang L."/>
            <person name="Zou H."/>
        </authorList>
    </citation>
    <scope>GLYCOSYLATION [LARGE SCALE ANALYSIS] AT ASN-160; ASN-193 AND ASN-216</scope>
    <source>
        <tissue>Liver</tissue>
    </source>
</reference>
<reference key="11">
    <citation type="journal article" date="2015" name="Proteomics">
        <title>N-terminome analysis of the human mitochondrial proteome.</title>
        <authorList>
            <person name="Vaca Jacome A.S."/>
            <person name="Rabilloud T."/>
            <person name="Schaeffer-Reiss C."/>
            <person name="Rompais M."/>
            <person name="Ayoub D."/>
            <person name="Lane L."/>
            <person name="Bairoch A."/>
            <person name="Van Dorsselaer A."/>
            <person name="Carapito C."/>
        </authorList>
    </citation>
    <scope>IDENTIFICATION BY MASS SPECTROMETRY [LARGE SCALE ANALYSIS]</scope>
</reference>
<reference key="12">
    <citation type="journal article" date="2005" name="Proc. Natl. Acad. Sci. U.S.A.">
        <title>The crystal structure of CREG, a secreted glycoprotein involved in cellular growth and differentiation.</title>
        <authorList>
            <person name="Sacher M."/>
            <person name="Di Bacco A."/>
            <person name="Lunin V.V."/>
            <person name="Ye Z."/>
            <person name="Wagner J."/>
            <person name="Gill G."/>
            <person name="Cygler M."/>
        </authorList>
    </citation>
    <scope>X-RAY CRYSTALLOGRAPHY (1.95 ANGSTROMS) OF 49-220</scope>
    <scope>SUBUNIT</scope>
</reference>
<organism>
    <name type="scientific">Homo sapiens</name>
    <name type="common">Human</name>
    <dbReference type="NCBI Taxonomy" id="9606"/>
    <lineage>
        <taxon>Eukaryota</taxon>
        <taxon>Metazoa</taxon>
        <taxon>Chordata</taxon>
        <taxon>Craniata</taxon>
        <taxon>Vertebrata</taxon>
        <taxon>Euteleostomi</taxon>
        <taxon>Mammalia</taxon>
        <taxon>Eutheria</taxon>
        <taxon>Euarchontoglires</taxon>
        <taxon>Primates</taxon>
        <taxon>Haplorrhini</taxon>
        <taxon>Catarrhini</taxon>
        <taxon>Hominidae</taxon>
        <taxon>Homo</taxon>
    </lineage>
</organism>
<feature type="signal peptide" evidence="3">
    <location>
        <begin position="1"/>
        <end position="31"/>
    </location>
</feature>
<feature type="chain" id="PRO_0000006203" description="Protein CREG1">
    <location>
        <begin position="32"/>
        <end position="220"/>
    </location>
</feature>
<feature type="glycosylation site" description="N-linked (GlcNAc...) asparagine" evidence="5">
    <location>
        <position position="160"/>
    </location>
</feature>
<feature type="glycosylation site" description="N-linked (GlcNAc...) asparagine" evidence="5">
    <location>
        <position position="193"/>
    </location>
</feature>
<feature type="glycosylation site" description="N-linked (GlcNAc...) asparagine" evidence="5">
    <location>
        <position position="216"/>
    </location>
</feature>
<feature type="sequence conflict" description="In Ref. 4; BAC04550." evidence="7" ref="4">
    <location>
        <begin position="52"/>
        <end position="59"/>
    </location>
</feature>
<feature type="helix" evidence="8">
    <location>
        <begin position="55"/>
        <end position="65"/>
    </location>
</feature>
<feature type="strand" evidence="8">
    <location>
        <begin position="67"/>
        <end position="74"/>
    </location>
</feature>
<feature type="helix" evidence="8">
    <location>
        <begin position="78"/>
        <end position="80"/>
    </location>
</feature>
<feature type="strand" evidence="8">
    <location>
        <begin position="84"/>
        <end position="90"/>
    </location>
</feature>
<feature type="strand" evidence="8">
    <location>
        <begin position="104"/>
        <end position="107"/>
    </location>
</feature>
<feature type="helix" evidence="8">
    <location>
        <begin position="112"/>
        <end position="119"/>
    </location>
</feature>
<feature type="strand" evidence="8">
    <location>
        <begin position="122"/>
        <end position="128"/>
    </location>
</feature>
<feature type="helix" evidence="8">
    <location>
        <begin position="129"/>
        <end position="131"/>
    </location>
</feature>
<feature type="helix" evidence="8">
    <location>
        <begin position="134"/>
        <end position="138"/>
    </location>
</feature>
<feature type="strand" evidence="8">
    <location>
        <begin position="149"/>
        <end position="158"/>
    </location>
</feature>
<feature type="helix" evidence="8">
    <location>
        <begin position="161"/>
        <end position="163"/>
    </location>
</feature>
<feature type="helix" evidence="8">
    <location>
        <begin position="164"/>
        <end position="174"/>
    </location>
</feature>
<feature type="helix" evidence="8">
    <location>
        <begin position="176"/>
        <end position="180"/>
    </location>
</feature>
<feature type="helix" evidence="8">
    <location>
        <begin position="183"/>
        <end position="185"/>
    </location>
</feature>
<feature type="strand" evidence="8">
    <location>
        <begin position="188"/>
        <end position="200"/>
    </location>
</feature>
<feature type="strand" evidence="8">
    <location>
        <begin position="202"/>
        <end position="205"/>
    </location>
</feature>
<feature type="helix" evidence="8">
    <location>
        <begin position="211"/>
        <end position="216"/>
    </location>
</feature>
<protein>
    <recommendedName>
        <fullName>Protein CREG1</fullName>
    </recommendedName>
    <alternativeName>
        <fullName>Cellular repressor of E1A-stimulated genes 1</fullName>
    </alternativeName>
</protein>
<evidence type="ECO:0000269" key="1">
    <source>
    </source>
</evidence>
<evidence type="ECO:0000269" key="2">
    <source>
    </source>
</evidence>
<evidence type="ECO:0000269" key="3">
    <source>
    </source>
</evidence>
<evidence type="ECO:0000269" key="4">
    <source>
    </source>
</evidence>
<evidence type="ECO:0000269" key="5">
    <source>
    </source>
</evidence>
<evidence type="ECO:0000269" key="6">
    <source>
    </source>
</evidence>
<evidence type="ECO:0000305" key="7"/>
<evidence type="ECO:0007829" key="8">
    <source>
        <dbReference type="PDB" id="1XHN"/>
    </source>
</evidence>
<name>CREG1_HUMAN</name>